<geneLocation type="chloroplast"/>
<keyword id="KW-0150">Chloroplast</keyword>
<keyword id="KW-0472">Membrane</keyword>
<keyword id="KW-0934">Plastid</keyword>
<keyword id="KW-1001">Plastid inner membrane</keyword>
<keyword id="KW-0653">Protein transport</keyword>
<keyword id="KW-1185">Reference proteome</keyword>
<keyword id="KW-0812">Transmembrane</keyword>
<keyword id="KW-1133">Transmembrane helix</keyword>
<keyword id="KW-0813">Transport</keyword>
<reference key="1">
    <citation type="journal article" date="2006" name="BMC Evol. Biol.">
        <title>Phylogenetic analyses of Vitis (Vitaceae) based on complete chloroplast genome sequences: effects of taxon sampling and phylogenetic methods on resolving relationships among rosids.</title>
        <authorList>
            <person name="Jansen R.K."/>
            <person name="Kaittanis C."/>
            <person name="Lee S.-B."/>
            <person name="Saski C."/>
            <person name="Tomkins J."/>
            <person name="Alverson A.J."/>
            <person name="Daniell H."/>
        </authorList>
    </citation>
    <scope>NUCLEOTIDE SEQUENCE [LARGE SCALE GENOMIC DNA]</scope>
    <source>
        <strain>cv. Maxxa</strain>
    </source>
</reference>
<name>TI214_VITVI</name>
<evidence type="ECO:0000250" key="1">
    <source>
        <dbReference type="UniProtKB" id="P56785"/>
    </source>
</evidence>
<evidence type="ECO:0000255" key="2"/>
<evidence type="ECO:0000256" key="3">
    <source>
        <dbReference type="SAM" id="MobiDB-lite"/>
    </source>
</evidence>
<evidence type="ECO:0000305" key="4"/>
<organism>
    <name type="scientific">Vitis vinifera</name>
    <name type="common">Grape</name>
    <dbReference type="NCBI Taxonomy" id="29760"/>
    <lineage>
        <taxon>Eukaryota</taxon>
        <taxon>Viridiplantae</taxon>
        <taxon>Streptophyta</taxon>
        <taxon>Embryophyta</taxon>
        <taxon>Tracheophyta</taxon>
        <taxon>Spermatophyta</taxon>
        <taxon>Magnoliopsida</taxon>
        <taxon>eudicotyledons</taxon>
        <taxon>Gunneridae</taxon>
        <taxon>Pentapetalae</taxon>
        <taxon>rosids</taxon>
        <taxon>Vitales</taxon>
        <taxon>Vitaceae</taxon>
        <taxon>Viteae</taxon>
        <taxon>Vitis</taxon>
    </lineage>
</organism>
<proteinExistence type="inferred from homology"/>
<sequence length="1893" mass="225561">MILKSFLLGNLVSLCMKIINSVVVVGLYYGFLTTFSIGPSYLFLLRAQVMEEGEEGTEKKVSAITGFITGQLMMFISIYYAPLHLALGRPHTITVLALPYLLFHFFWNNHKHFFDYGSTTRNSMRNLSIQCVFLNNLIFQLLNHFILPSSMLARLVNIYMFRCNNKMLFVTSSFVGWLIGHILFMKWVGLVLVWIRQNPSIRSNVLIRSNKYLVSELRNSMARIFSILLFITCVYYLGRIPSPILTKKMKETSETEERGESEEETDVEIERTSETKGTKQEQERSTEEDPSPSLFSEEKEDPDKIDETEEIRVNGKEKTKDEFHFKETCYKNSPVYETSYLDGNQENSKLEILKEDEDNKNKKWFEKPLVTLLFDYKRWNRPLRYIKARFQIKKAVRNEMSQYFFYTCLSDGKQRISFTYPPSLSIFLEMIQRKMSLSTTERLSYDELYNHWIYTNEQKENTLRKEFITRIEALDNGSLTLDVLEKRTRLCNDATKKEYLPKIYDPFLNGPYRGTIKKMFSPSIINETSRENSIEKFRINKIYGILFAIDYREFEHTFDRKSLSTKIGYFLNLINQFTIESPSNLNLKRLSLFPEQGKVDSDSEDQAKFLNFFFDRVITDPKDQTIRKKSIGIKEISKKVPRWSYKLMKNEEEGETLVVYQEIRSRKSKHVVIFTDNQQNADTYTANANKDIDNSEQTNEVALIRYSQQSDFRRDIIKGSMRAQRRKIVIRELFQANVHSPLFLDRIYKPIFFSFDISGLIKLIFENWKEKNKKLKIPNYAEEKTREKRQKAKREEKARIKIAEVWDTVLFAQVIRGCLLLTQSIFRKYIILPSLIIAKNIGRMLLFQSPEWSEDLKDWNREMHVKCTYNGVQLSETEFPQNWLRDGIQIKILFPFCLKPWHKPQERSLDKDSMKDKVKKFCFLTVWGMETDLPFGSPRKRPSFFKPILKELEKRIRKFKNKCFLVLTVLKERTKLFIFLRVSKETKKWVIKSVLFINIKKIIKELLKINPTLLFGLREVYESSETQKQKDSIINNQMIHKSSIQIRSMNWTNYSLTEKKVKDLTDRTSTIRKKIEKIIKDKKKLFLTPEINISPNKASYNAKRLESQKSIWQILKRRNSRLIRKLHYFIKFFIERIYIDILLCLINIPRTNAQFFIESTKKIIDKYVYNNERNQKRIGKPNQKKIHFISIIKRSVSSISNKSSQIFCDLSSLSQAYVFYKLSQTQVINLYKLRSVLQYNGTSLFLKNERKDYFGFGAHEIFHYELRHKKLRNSGMNQWKNWLRGHYQYKYLSPIIWSRLVPQKWRNRVNQHCVAQNQNKDLSKWDLSQKDQLIHYNKQNDYEADSLTNQKENFKKHYRYDLLSYKYINYEDKNDSYIYGSPLQVNNNQDISYNYNTHKRKFFDMLEGIPINNYLGEDDIMYIEYIKKNPDRKYFDWKILHFCFRKKVDIEVWINTSINSNKNTKTGSNNYQIIDKKGLFYLTQDQEIKPSNQKDLFDWMGMNEEILNRSISNLEPWFFPEFVLLYNTYKMKPWVIPIKLLLLNFNGNKNYSKNRNSNRKQKGNLFISSNEKKLLKLENRNQEEKESAGQVDLGSDVQNQGNLESVLSNHEKDIEEDYAGSDSDMQKRTKKKQFKNHTEAELDLFLKRYLLFQLRWDDSLNQKMINNIKVYCLLLRLINPREICISAIQRGEMSLDLIPVHKDLTLTELMKMKRGIFIIEPIRLSVKNDGQFIMYQTIGISLVHKSKYQTNQRYREERYVDNKNCDKFSARCQKMIGNKDKNHYDLLVPENILSPRRRRKFRILICFNLRNRSGVARNPVFCNGNSCNKFLDENKHLDRDKNQLIKLKKLKLFLWPNYRLEDLACMNRYWFDTNNGSCFSMIRIHMYPRLKIR</sequence>
<dbReference type="EMBL" id="DQ424856">
    <property type="protein sequence ID" value="ABE47593.1"/>
    <property type="molecule type" value="Genomic_DNA"/>
</dbReference>
<dbReference type="RefSeq" id="YP_567136.1">
    <property type="nucleotide sequence ID" value="NC_007957.1"/>
</dbReference>
<dbReference type="STRING" id="29760.Q0ZIW0"/>
<dbReference type="PaxDb" id="29760-VIT_09s0054g00520.t01"/>
<dbReference type="GeneID" id="4025074"/>
<dbReference type="KEGG" id="vvi:4025074"/>
<dbReference type="eggNOG" id="ENOG502QSDY">
    <property type="taxonomic scope" value="Eukaryota"/>
</dbReference>
<dbReference type="InParanoid" id="Q0ZIW0"/>
<dbReference type="OrthoDB" id="1938219at2759"/>
<dbReference type="Proteomes" id="UP000009183">
    <property type="component" value="Chloroplast"/>
</dbReference>
<dbReference type="ExpressionAtlas" id="Q0ZIW0">
    <property type="expression patterns" value="baseline and differential"/>
</dbReference>
<dbReference type="GO" id="GO:0009706">
    <property type="term" value="C:chloroplast inner membrane"/>
    <property type="evidence" value="ECO:0007669"/>
    <property type="project" value="UniProtKB-SubCell"/>
</dbReference>
<dbReference type="GO" id="GO:0015031">
    <property type="term" value="P:protein transport"/>
    <property type="evidence" value="ECO:0007669"/>
    <property type="project" value="UniProtKB-KW"/>
</dbReference>
<dbReference type="InterPro" id="IPR008896">
    <property type="entry name" value="TIC214"/>
</dbReference>
<dbReference type="PANTHER" id="PTHR33163:SF40">
    <property type="entry name" value="PROTEIN TIC 214"/>
    <property type="match status" value="1"/>
</dbReference>
<dbReference type="PANTHER" id="PTHR33163">
    <property type="entry name" value="PROTEIN TIC 214-RELATED"/>
    <property type="match status" value="1"/>
</dbReference>
<dbReference type="Pfam" id="PF05758">
    <property type="entry name" value="Ycf1"/>
    <property type="match status" value="1"/>
</dbReference>
<gene>
    <name evidence="1" type="primary">TIC214</name>
    <name type="synonym">ycf1</name>
</gene>
<protein>
    <recommendedName>
        <fullName evidence="1">Protein TIC 214</fullName>
    </recommendedName>
    <alternativeName>
        <fullName evidence="1">Translocon at the inner envelope membrane of chloroplasts 214</fullName>
        <shortName evidence="1">AtTIC214</shortName>
    </alternativeName>
</protein>
<accession>Q0ZIW0</accession>
<feature type="chain" id="PRO_0000262635" description="Protein TIC 214">
    <location>
        <begin position="1"/>
        <end position="1893"/>
    </location>
</feature>
<feature type="transmembrane region" description="Helical" evidence="2">
    <location>
        <begin position="18"/>
        <end position="38"/>
    </location>
</feature>
<feature type="transmembrane region" description="Helical" evidence="2">
    <location>
        <begin position="63"/>
        <end position="83"/>
    </location>
</feature>
<feature type="transmembrane region" description="Helical" evidence="2">
    <location>
        <begin position="87"/>
        <end position="107"/>
    </location>
</feature>
<feature type="transmembrane region" description="Helical" evidence="2">
    <location>
        <begin position="127"/>
        <end position="147"/>
    </location>
</feature>
<feature type="transmembrane region" description="Helical" evidence="2">
    <location>
        <begin position="175"/>
        <end position="195"/>
    </location>
</feature>
<feature type="transmembrane region" description="Helical" evidence="2">
    <location>
        <begin position="224"/>
        <end position="244"/>
    </location>
</feature>
<feature type="transmembrane region" description="Helical" evidence="2">
    <location>
        <begin position="1126"/>
        <end position="1146"/>
    </location>
</feature>
<feature type="region of interest" description="Disordered" evidence="3">
    <location>
        <begin position="249"/>
        <end position="317"/>
    </location>
</feature>
<feature type="compositionally biased region" description="Basic and acidic residues" evidence="3">
    <location>
        <begin position="249"/>
        <end position="258"/>
    </location>
</feature>
<feature type="compositionally biased region" description="Basic and acidic residues" evidence="3">
    <location>
        <begin position="268"/>
        <end position="287"/>
    </location>
</feature>
<feature type="compositionally biased region" description="Acidic residues" evidence="3">
    <location>
        <begin position="298"/>
        <end position="309"/>
    </location>
</feature>
<comment type="function">
    <text evidence="1">Involved in protein precursor import into chloroplasts. May be part of an intermediate translocation complex acting as a protein-conducting channel at the inner envelope.</text>
</comment>
<comment type="subunit">
    <text evidence="1">Part of the Tic complex.</text>
</comment>
<comment type="subcellular location">
    <subcellularLocation>
        <location evidence="1">Plastid</location>
        <location evidence="1">Chloroplast inner membrane</location>
        <topology evidence="2">Multi-pass membrane protein</topology>
    </subcellularLocation>
</comment>
<comment type="similarity">
    <text evidence="4">Belongs to the TIC214 family.</text>
</comment>